<sequence length="246" mass="27692">MECVNCDCTVKTMDNLDQAIRALLQRGKHVNRMMDNEKLIREARRMEEVQQLKMQIPKPVDKKPRPPPSENNLKLISCEETCMDETLKNSSKPRMIYNKQLGRAESIDFDVPSLSYESSEKCAGETSPYTSASVSNSKKATSSSNFTKSETTTITELTTSTFKKSNNSSGGALVLDNHYLINNDDGTVKKLPMKVYVKQRLEDGSLDVQLVFFDENSQKVMDISMLVNGKKIRNVQFCGKDAKLVN</sequence>
<dbReference type="EMBL" id="Z11115">
    <property type="protein sequence ID" value="CAA77461.2"/>
    <property type="molecule type" value="Genomic_DNA"/>
</dbReference>
<dbReference type="EMBL" id="Z11126">
    <property type="protein sequence ID" value="CAA77461.2"/>
    <property type="status" value="JOINED"/>
    <property type="molecule type" value="Genomic_DNA"/>
</dbReference>
<dbReference type="PIR" id="H88542">
    <property type="entry name" value="H88542"/>
</dbReference>
<dbReference type="PIR" id="S15800">
    <property type="entry name" value="S15800"/>
</dbReference>
<dbReference type="RefSeq" id="NP_001369831.1">
    <property type="nucleotide sequence ID" value="NM_001382952.2"/>
</dbReference>
<dbReference type="RefSeq" id="NP_498975.2">
    <property type="nucleotide sequence ID" value="NM_066574.5"/>
</dbReference>
<dbReference type="SMR" id="P34658"/>
<dbReference type="FunCoup" id="P34658">
    <property type="interactions" value="1511"/>
</dbReference>
<dbReference type="STRING" id="6239.ZK637.12.1"/>
<dbReference type="PaxDb" id="6239-ZK637.12.2"/>
<dbReference type="PeptideAtlas" id="P34658"/>
<dbReference type="EnsemblMetazoa" id="ZK637.12.1">
    <property type="protein sequence ID" value="ZK637.12.1"/>
    <property type="gene ID" value="WBGene00014029"/>
</dbReference>
<dbReference type="GeneID" id="176262"/>
<dbReference type="UCSC" id="ZK637.12">
    <property type="organism name" value="c. elegans"/>
</dbReference>
<dbReference type="AGR" id="WB:WBGene00014029"/>
<dbReference type="WormBase" id="ZK637.12">
    <property type="protein sequence ID" value="CE39882"/>
    <property type="gene ID" value="WBGene00014029"/>
</dbReference>
<dbReference type="eggNOG" id="ENOG502THWI">
    <property type="taxonomic scope" value="Eukaryota"/>
</dbReference>
<dbReference type="GeneTree" id="ENSGT00390000015221"/>
<dbReference type="HOGENOM" id="CLU_1162022_0_0_1"/>
<dbReference type="InParanoid" id="P34658"/>
<dbReference type="OMA" id="ECVNCEC"/>
<dbReference type="OrthoDB" id="5811742at2759"/>
<dbReference type="PhylomeDB" id="P34658"/>
<dbReference type="PRO" id="PR:P34658"/>
<dbReference type="Proteomes" id="UP000001940">
    <property type="component" value="Chromosome III"/>
</dbReference>
<dbReference type="Bgee" id="WBGene00014029">
    <property type="expression patterns" value="Expressed in adult organism and 2 other cell types or tissues"/>
</dbReference>
<name>YOUB_CAEEL</name>
<gene>
    <name type="ORF">ZK637.12</name>
</gene>
<evidence type="ECO:0000256" key="1">
    <source>
        <dbReference type="SAM" id="MobiDB-lite"/>
    </source>
</evidence>
<protein>
    <recommendedName>
        <fullName>Uncharacterized protein ZK637.12</fullName>
    </recommendedName>
</protein>
<proteinExistence type="predicted"/>
<reference key="1">
    <citation type="journal article" date="1992" name="Nature">
        <title>The C. elegans genome sequencing project: a beginning.</title>
        <authorList>
            <person name="Sulston J."/>
            <person name="Du Z."/>
            <person name="Thomas K."/>
            <person name="Wilson R."/>
            <person name="Hillier L."/>
            <person name="Staden R."/>
            <person name="Halloran N."/>
            <person name="Green P."/>
            <person name="Thierry-Mieg J."/>
            <person name="Qiu L."/>
            <person name="Dear S."/>
            <person name="Coulson A."/>
            <person name="Craxton M."/>
            <person name="Durbin R."/>
            <person name="Berks M."/>
            <person name="Metzstein M."/>
            <person name="Hawkins T."/>
            <person name="Ainscough R."/>
            <person name="Waterston R."/>
        </authorList>
    </citation>
    <scope>NUCLEOTIDE SEQUENCE [LARGE SCALE GENOMIC DNA]</scope>
    <source>
        <strain>Bristol N2</strain>
    </source>
</reference>
<reference key="2">
    <citation type="journal article" date="1998" name="Science">
        <title>Genome sequence of the nematode C. elegans: a platform for investigating biology.</title>
        <authorList>
            <consortium name="The C. elegans sequencing consortium"/>
        </authorList>
    </citation>
    <scope>NUCLEOTIDE SEQUENCE [LARGE SCALE GENOMIC DNA]</scope>
    <source>
        <strain>Bristol N2</strain>
    </source>
</reference>
<organism>
    <name type="scientific">Caenorhabditis elegans</name>
    <dbReference type="NCBI Taxonomy" id="6239"/>
    <lineage>
        <taxon>Eukaryota</taxon>
        <taxon>Metazoa</taxon>
        <taxon>Ecdysozoa</taxon>
        <taxon>Nematoda</taxon>
        <taxon>Chromadorea</taxon>
        <taxon>Rhabditida</taxon>
        <taxon>Rhabditina</taxon>
        <taxon>Rhabditomorpha</taxon>
        <taxon>Rhabditoidea</taxon>
        <taxon>Rhabditidae</taxon>
        <taxon>Peloderinae</taxon>
        <taxon>Caenorhabditis</taxon>
    </lineage>
</organism>
<accession>P34658</accession>
<accession>Q23557</accession>
<keyword id="KW-1185">Reference proteome</keyword>
<feature type="chain" id="PRO_0000065531" description="Uncharacterized protein ZK637.12">
    <location>
        <begin position="1"/>
        <end position="246"/>
    </location>
</feature>
<feature type="region of interest" description="Disordered" evidence="1">
    <location>
        <begin position="120"/>
        <end position="149"/>
    </location>
</feature>
<feature type="compositionally biased region" description="Low complexity" evidence="1">
    <location>
        <begin position="130"/>
        <end position="149"/>
    </location>
</feature>